<gene>
    <name evidence="1" type="primary">ndvA</name>
    <name type="synonym">chvA</name>
</gene>
<sequence length="588" mass="64651">MTLFQVYTRALRYLTVHKWRVAVVVIANVILAAITIAEPVLFGRIIDAISSGTNVTPILILWAGFGVFNTVAYVAVAREADRLAHGRRATLLTEAFGRIISMPLSWHHLRGTSNALHTLLRASETLFGLWLEFMRTHLATFVALVLLIPTAMAMDLRLSFVLIGLGIVYWFIGKWVMGRTKDGQASVEEHYHSVFAHVSDSISNVSVLHSYNRIEAETKALKSFTEKLLSAQYPVLDWWAFASALNRTASTVSMMIILVIGTVLVKNGELRVGDVIAFIGFANLLIGRLDQMRQFVTQIFEARAKLEDFFVLEDAVKEREEPGDARELSNVSGTVEFRNINFGFANTKQGVHDVSFTAKAGETVAIVGPTGAGKTTLINLLQRVYDPDSGQILIDGTDISTVTKNSLRNSIATVFQDAGLLNRSIRENIRLGRETATDAEVVEAAAAAAATDFIDSRINGYLTQVGERGNRLSGGERQRIAIARAILKNAPILVLDEATSALDVETEARVKAAVDALRKNRTTFIIAHRLSTVRDADLVLFLDQGRIIEKGTFDELTQRGGRFTSLLRTSGLLTEDEGQQPRPKAIAS</sequence>
<organism>
    <name type="scientific">Rhizobium radiobacter</name>
    <name type="common">Agrobacterium tumefaciens</name>
    <name type="synonym">Agrobacterium radiobacter</name>
    <dbReference type="NCBI Taxonomy" id="358"/>
    <lineage>
        <taxon>Bacteria</taxon>
        <taxon>Pseudomonadati</taxon>
        <taxon>Pseudomonadota</taxon>
        <taxon>Alphaproteobacteria</taxon>
        <taxon>Hyphomicrobiales</taxon>
        <taxon>Rhizobiaceae</taxon>
        <taxon>Rhizobium/Agrobacterium group</taxon>
        <taxon>Agrobacterium</taxon>
        <taxon>Agrobacterium tumefaciens complex</taxon>
    </lineage>
</organism>
<proteinExistence type="evidence at protein level"/>
<evidence type="ECO:0000255" key="1">
    <source>
        <dbReference type="HAMAP-Rule" id="MF_01728"/>
    </source>
</evidence>
<evidence type="ECO:0000269" key="2">
    <source>
    </source>
</evidence>
<evidence type="ECO:0000269" key="3">
    <source>
    </source>
</evidence>
<evidence type="ECO:0000305" key="4">
    <source>
    </source>
</evidence>
<evidence type="ECO:0000305" key="5">
    <source>
    </source>
</evidence>
<accession>P0A2V1</accession>
<accession>P18768</accession>
<name>NDVA_RHIRD</name>
<feature type="chain" id="PRO_0000092232" description="Beta-(1--&gt;2)glucan export ATP-binding/permease protein NdvA">
    <location>
        <begin position="1"/>
        <end position="588"/>
    </location>
</feature>
<feature type="transmembrane region" description="Helical" evidence="1">
    <location>
        <begin position="22"/>
        <end position="42"/>
    </location>
</feature>
<feature type="transmembrane region" description="Helical" evidence="1">
    <location>
        <begin position="57"/>
        <end position="77"/>
    </location>
</feature>
<feature type="transmembrane region" description="Helical" evidence="1">
    <location>
        <begin position="136"/>
        <end position="156"/>
    </location>
</feature>
<feature type="transmembrane region" description="Helical" evidence="1">
    <location>
        <begin position="158"/>
        <end position="178"/>
    </location>
</feature>
<feature type="transmembrane region" description="Helical" evidence="1">
    <location>
        <begin position="248"/>
        <end position="268"/>
    </location>
</feature>
<feature type="transmembrane region" description="Helical" evidence="1">
    <location>
        <begin position="272"/>
        <end position="292"/>
    </location>
</feature>
<feature type="domain" description="ABC transmembrane type-1" evidence="1">
    <location>
        <begin position="21"/>
        <end position="301"/>
    </location>
</feature>
<feature type="domain" description="ABC transporter" evidence="1">
    <location>
        <begin position="335"/>
        <end position="569"/>
    </location>
</feature>
<feature type="binding site" evidence="1">
    <location>
        <begin position="368"/>
        <end position="375"/>
    </location>
    <ligand>
        <name>ATP</name>
        <dbReference type="ChEBI" id="CHEBI:30616"/>
    </ligand>
</feature>
<comment type="function">
    <text evidence="4 5">Involved in beta-(1--&gt;2)glucan export which is required for crown gall tumor formation. Transmembrane domains (TMD) form a pore in the inner membrane and the ATP-binding domain (NBD) is responsible for energy generation (Probable).</text>
</comment>
<comment type="catalytic activity">
    <reaction evidence="1">
        <text>[(1-&gt;2)-beta-D-glucosyl](n)(in) + ATP + H2O = [(1-&gt;2)-beta-D-glucosyl](n)(out) + ADP + phosphate + H(+)</text>
        <dbReference type="Rhea" id="RHEA:18453"/>
        <dbReference type="Rhea" id="RHEA-COMP:11881"/>
        <dbReference type="ChEBI" id="CHEBI:15377"/>
        <dbReference type="ChEBI" id="CHEBI:15378"/>
        <dbReference type="ChEBI" id="CHEBI:27517"/>
        <dbReference type="ChEBI" id="CHEBI:30616"/>
        <dbReference type="ChEBI" id="CHEBI:43474"/>
        <dbReference type="ChEBI" id="CHEBI:456216"/>
        <dbReference type="EC" id="7.5.2.3"/>
    </reaction>
</comment>
<comment type="subunit">
    <text evidence="1">Homodimer.</text>
</comment>
<comment type="subcellular location">
    <subcellularLocation>
        <location evidence="1 2 3">Cell inner membrane</location>
        <topology evidence="1 2 3">Multi-pass membrane protein</topology>
    </subcellularLocation>
</comment>
<comment type="domain">
    <text>In NdvA the ATP-binding domain (NBD) and the transmembrane domain (TMD) are fused.</text>
</comment>
<comment type="similarity">
    <text evidence="1">Belongs to the ABC transporter superfamily. Beta-(1--&gt;2)glucan exporter (TC 3.A.1.108.1) family.</text>
</comment>
<reference key="1">
    <citation type="journal article" date="1989" name="J. Bacteriol.">
        <title>Role of Agrobacterium tumefaciens ChvA protein in export of beta-1,2-glucan.</title>
        <authorList>
            <person name="Cangelosi G.A."/>
            <person name="Martinetti G."/>
            <person name="Leigh J.A."/>
            <person name="Lee C.C."/>
            <person name="Theines C."/>
            <person name="Nester E.W."/>
        </authorList>
    </citation>
    <scope>NUCLEOTIDE SEQUENCE [GENOMIC DNA]</scope>
    <scope>FUNCTION IN BETA-(1-&gt;2)GLUCAN TRANSPORT</scope>
    <scope>SUBCELLULAR LOCATION</scope>
    <source>
        <strain>A348</strain>
    </source>
</reference>
<reference key="2">
    <citation type="journal article" date="1989" name="J. Bacteriol.">
        <title>Biochemical characterization of avirulent Agrobacterium tumefaciens chvA mutants: synthesis and excretion of beta-(1-2)glucan.</title>
        <authorList>
            <person name="Inon de Iannino N."/>
            <person name="Ugalde R.A."/>
        </authorList>
    </citation>
    <scope>FUNCTION IN BETA-(1-&gt;2)GLUCAN TRANSPORT</scope>
    <scope>SUBCELLULAR LOCATION</scope>
    <source>
        <strain>A348</strain>
    </source>
</reference>
<keyword id="KW-0067">ATP-binding</keyword>
<keyword id="KW-0997">Cell inner membrane</keyword>
<keyword id="KW-1003">Cell membrane</keyword>
<keyword id="KW-0472">Membrane</keyword>
<keyword id="KW-0547">Nucleotide-binding</keyword>
<keyword id="KW-0762">Sugar transport</keyword>
<keyword id="KW-1278">Translocase</keyword>
<keyword id="KW-0812">Transmembrane</keyword>
<keyword id="KW-1133">Transmembrane helix</keyword>
<keyword id="KW-0813">Transport</keyword>
<protein>
    <recommendedName>
        <fullName evidence="1">Beta-(1--&gt;2)glucan export ATP-binding/permease protein NdvA</fullName>
        <ecNumber evidence="1">7.5.2.3</ecNumber>
    </recommendedName>
    <alternativeName>
        <fullName>Attachment protein</fullName>
    </alternativeName>
</protein>
<dbReference type="EC" id="7.5.2.3" evidence="1"/>
<dbReference type="EMBL" id="M24198">
    <property type="protein sequence ID" value="AAA22083.1"/>
    <property type="molecule type" value="Genomic_DNA"/>
</dbReference>
<dbReference type="PIR" id="A32810">
    <property type="entry name" value="VXAGCA"/>
</dbReference>
<dbReference type="SMR" id="P0A2V1"/>
<dbReference type="PATRIC" id="fig|358.65.peg.4035"/>
<dbReference type="eggNOG" id="COG1132">
    <property type="taxonomic scope" value="Bacteria"/>
</dbReference>
<dbReference type="GO" id="GO:0005886">
    <property type="term" value="C:plasma membrane"/>
    <property type="evidence" value="ECO:0007669"/>
    <property type="project" value="UniProtKB-SubCell"/>
</dbReference>
<dbReference type="GO" id="GO:0015441">
    <property type="term" value="F:ABC-type beta-glucan transporter activity"/>
    <property type="evidence" value="ECO:0007669"/>
    <property type="project" value="UniProtKB-EC"/>
</dbReference>
<dbReference type="GO" id="GO:0015421">
    <property type="term" value="F:ABC-type oligopeptide transporter activity"/>
    <property type="evidence" value="ECO:0007669"/>
    <property type="project" value="TreeGrafter"/>
</dbReference>
<dbReference type="GO" id="GO:0005524">
    <property type="term" value="F:ATP binding"/>
    <property type="evidence" value="ECO:0007669"/>
    <property type="project" value="UniProtKB-KW"/>
</dbReference>
<dbReference type="GO" id="GO:0016887">
    <property type="term" value="F:ATP hydrolysis activity"/>
    <property type="evidence" value="ECO:0007669"/>
    <property type="project" value="InterPro"/>
</dbReference>
<dbReference type="CDD" id="cd18562">
    <property type="entry name" value="ABC_6TM_NdvA_beta-glucan_exporter_like"/>
    <property type="match status" value="1"/>
</dbReference>
<dbReference type="CDD" id="cd03254">
    <property type="entry name" value="ABCC_Glucan_exporter_like"/>
    <property type="match status" value="1"/>
</dbReference>
<dbReference type="FunFam" id="3.40.50.300:FF:000221">
    <property type="entry name" value="Multidrug ABC transporter ATP-binding protein"/>
    <property type="match status" value="1"/>
</dbReference>
<dbReference type="Gene3D" id="1.20.1560.10">
    <property type="entry name" value="ABC transporter type 1, transmembrane domain"/>
    <property type="match status" value="1"/>
</dbReference>
<dbReference type="Gene3D" id="3.40.50.300">
    <property type="entry name" value="P-loop containing nucleotide triphosphate hydrolases"/>
    <property type="match status" value="1"/>
</dbReference>
<dbReference type="InterPro" id="IPR003593">
    <property type="entry name" value="AAA+_ATPase"/>
</dbReference>
<dbReference type="InterPro" id="IPR011527">
    <property type="entry name" value="ABC1_TM_dom"/>
</dbReference>
<dbReference type="InterPro" id="IPR036640">
    <property type="entry name" value="ABC1_TM_sf"/>
</dbReference>
<dbReference type="InterPro" id="IPR003439">
    <property type="entry name" value="ABC_transporter-like_ATP-bd"/>
</dbReference>
<dbReference type="InterPro" id="IPR017871">
    <property type="entry name" value="ABC_transporter-like_CS"/>
</dbReference>
<dbReference type="InterPro" id="IPR005896">
    <property type="entry name" value="NdvA"/>
</dbReference>
<dbReference type="InterPro" id="IPR027417">
    <property type="entry name" value="P-loop_NTPase"/>
</dbReference>
<dbReference type="InterPro" id="IPR039421">
    <property type="entry name" value="Type_1_exporter"/>
</dbReference>
<dbReference type="NCBIfam" id="TIGR01192">
    <property type="entry name" value="chvA"/>
    <property type="match status" value="1"/>
</dbReference>
<dbReference type="NCBIfam" id="NF010178">
    <property type="entry name" value="PRK13657.1"/>
    <property type="match status" value="1"/>
</dbReference>
<dbReference type="PANTHER" id="PTHR43394:SF1">
    <property type="entry name" value="ATP-BINDING CASSETTE SUB-FAMILY B MEMBER 10, MITOCHONDRIAL"/>
    <property type="match status" value="1"/>
</dbReference>
<dbReference type="PANTHER" id="PTHR43394">
    <property type="entry name" value="ATP-DEPENDENT PERMEASE MDL1, MITOCHONDRIAL"/>
    <property type="match status" value="1"/>
</dbReference>
<dbReference type="Pfam" id="PF00664">
    <property type="entry name" value="ABC_membrane"/>
    <property type="match status" value="1"/>
</dbReference>
<dbReference type="Pfam" id="PF00005">
    <property type="entry name" value="ABC_tran"/>
    <property type="match status" value="1"/>
</dbReference>
<dbReference type="SMART" id="SM00382">
    <property type="entry name" value="AAA"/>
    <property type="match status" value="1"/>
</dbReference>
<dbReference type="SUPFAM" id="SSF90123">
    <property type="entry name" value="ABC transporter transmembrane region"/>
    <property type="match status" value="1"/>
</dbReference>
<dbReference type="SUPFAM" id="SSF52540">
    <property type="entry name" value="P-loop containing nucleoside triphosphate hydrolases"/>
    <property type="match status" value="1"/>
</dbReference>
<dbReference type="PROSITE" id="PS50929">
    <property type="entry name" value="ABC_TM1F"/>
    <property type="match status" value="1"/>
</dbReference>
<dbReference type="PROSITE" id="PS00211">
    <property type="entry name" value="ABC_TRANSPORTER_1"/>
    <property type="match status" value="1"/>
</dbReference>
<dbReference type="PROSITE" id="PS50893">
    <property type="entry name" value="ABC_TRANSPORTER_2"/>
    <property type="match status" value="1"/>
</dbReference>
<dbReference type="PROSITE" id="PS51317">
    <property type="entry name" value="NDVA"/>
    <property type="match status" value="1"/>
</dbReference>